<protein>
    <recommendedName>
        <fullName evidence="1">Ubiquinone/menaquinone biosynthesis C-methyltransferase UbiE</fullName>
        <ecNumber evidence="1">2.1.1.163</ecNumber>
        <ecNumber evidence="1">2.1.1.201</ecNumber>
    </recommendedName>
    <alternativeName>
        <fullName evidence="1">2-methoxy-6-polyprenyl-1,4-benzoquinol methylase</fullName>
    </alternativeName>
    <alternativeName>
        <fullName evidence="1">Demethylmenaquinone methyltransferase</fullName>
    </alternativeName>
</protein>
<organism>
    <name type="scientific">Rickettsia akari (strain Hartford)</name>
    <dbReference type="NCBI Taxonomy" id="293614"/>
    <lineage>
        <taxon>Bacteria</taxon>
        <taxon>Pseudomonadati</taxon>
        <taxon>Pseudomonadota</taxon>
        <taxon>Alphaproteobacteria</taxon>
        <taxon>Rickettsiales</taxon>
        <taxon>Rickettsiaceae</taxon>
        <taxon>Rickettsieae</taxon>
        <taxon>Rickettsia</taxon>
        <taxon>spotted fever group</taxon>
    </lineage>
</organism>
<dbReference type="EC" id="2.1.1.163" evidence="1"/>
<dbReference type="EC" id="2.1.1.201" evidence="1"/>
<dbReference type="EMBL" id="CP000847">
    <property type="protein sequence ID" value="ABV75305.1"/>
    <property type="molecule type" value="Genomic_DNA"/>
</dbReference>
<dbReference type="RefSeq" id="WP_012149935.1">
    <property type="nucleotide sequence ID" value="NC_009881.1"/>
</dbReference>
<dbReference type="SMR" id="A8GPI0"/>
<dbReference type="STRING" id="293614.A1C_05265"/>
<dbReference type="KEGG" id="rak:A1C_05265"/>
<dbReference type="eggNOG" id="COG2226">
    <property type="taxonomic scope" value="Bacteria"/>
</dbReference>
<dbReference type="HOGENOM" id="CLU_037990_0_1_5"/>
<dbReference type="UniPathway" id="UPA00079">
    <property type="reaction ID" value="UER00169"/>
</dbReference>
<dbReference type="UniPathway" id="UPA00232"/>
<dbReference type="Proteomes" id="UP000006830">
    <property type="component" value="Chromosome"/>
</dbReference>
<dbReference type="GO" id="GO:0008425">
    <property type="term" value="F:2-methoxy-6-polyprenyl-1,4-benzoquinol methyltransferase activity"/>
    <property type="evidence" value="ECO:0007669"/>
    <property type="project" value="UniProtKB-UniRule"/>
</dbReference>
<dbReference type="GO" id="GO:0043770">
    <property type="term" value="F:demethylmenaquinone methyltransferase activity"/>
    <property type="evidence" value="ECO:0007669"/>
    <property type="project" value="UniProtKB-UniRule"/>
</dbReference>
<dbReference type="GO" id="GO:0009060">
    <property type="term" value="P:aerobic respiration"/>
    <property type="evidence" value="ECO:0007669"/>
    <property type="project" value="UniProtKB-UniRule"/>
</dbReference>
<dbReference type="GO" id="GO:0009234">
    <property type="term" value="P:menaquinone biosynthetic process"/>
    <property type="evidence" value="ECO:0007669"/>
    <property type="project" value="UniProtKB-UniRule"/>
</dbReference>
<dbReference type="GO" id="GO:0032259">
    <property type="term" value="P:methylation"/>
    <property type="evidence" value="ECO:0007669"/>
    <property type="project" value="UniProtKB-KW"/>
</dbReference>
<dbReference type="CDD" id="cd02440">
    <property type="entry name" value="AdoMet_MTases"/>
    <property type="match status" value="1"/>
</dbReference>
<dbReference type="FunFam" id="3.40.50.150:FF:000250">
    <property type="entry name" value="Ubiquinone/menaquinone biosynthesis C-methyltransferase UbiE"/>
    <property type="match status" value="1"/>
</dbReference>
<dbReference type="Gene3D" id="3.40.50.150">
    <property type="entry name" value="Vaccinia Virus protein VP39"/>
    <property type="match status" value="1"/>
</dbReference>
<dbReference type="HAMAP" id="MF_01813">
    <property type="entry name" value="MenG_UbiE_methyltr"/>
    <property type="match status" value="1"/>
</dbReference>
<dbReference type="InterPro" id="IPR029063">
    <property type="entry name" value="SAM-dependent_MTases_sf"/>
</dbReference>
<dbReference type="InterPro" id="IPR004033">
    <property type="entry name" value="UbiE/COQ5_MeTrFase"/>
</dbReference>
<dbReference type="InterPro" id="IPR023576">
    <property type="entry name" value="UbiE/COQ5_MeTrFase_CS"/>
</dbReference>
<dbReference type="NCBIfam" id="TIGR01934">
    <property type="entry name" value="MenG_MenH_UbiE"/>
    <property type="match status" value="1"/>
</dbReference>
<dbReference type="NCBIfam" id="NF001242">
    <property type="entry name" value="PRK00216.1-3"/>
    <property type="match status" value="1"/>
</dbReference>
<dbReference type="NCBIfam" id="NF001244">
    <property type="entry name" value="PRK00216.1-5"/>
    <property type="match status" value="1"/>
</dbReference>
<dbReference type="PANTHER" id="PTHR43591:SF24">
    <property type="entry name" value="2-METHOXY-6-POLYPRENYL-1,4-BENZOQUINOL METHYLASE, MITOCHONDRIAL"/>
    <property type="match status" value="1"/>
</dbReference>
<dbReference type="PANTHER" id="PTHR43591">
    <property type="entry name" value="METHYLTRANSFERASE"/>
    <property type="match status" value="1"/>
</dbReference>
<dbReference type="Pfam" id="PF01209">
    <property type="entry name" value="Ubie_methyltran"/>
    <property type="match status" value="1"/>
</dbReference>
<dbReference type="SUPFAM" id="SSF53335">
    <property type="entry name" value="S-adenosyl-L-methionine-dependent methyltransferases"/>
    <property type="match status" value="1"/>
</dbReference>
<dbReference type="PROSITE" id="PS51608">
    <property type="entry name" value="SAM_MT_UBIE"/>
    <property type="match status" value="1"/>
</dbReference>
<dbReference type="PROSITE" id="PS01183">
    <property type="entry name" value="UBIE_1"/>
    <property type="match status" value="1"/>
</dbReference>
<dbReference type="PROSITE" id="PS01184">
    <property type="entry name" value="UBIE_2"/>
    <property type="match status" value="1"/>
</dbReference>
<gene>
    <name evidence="1" type="primary">ubiE</name>
    <name type="ordered locus">A1C_05265</name>
</gene>
<sequence length="248" mass="28413">MNHIDFGFKKVDYTKKQGLVNSVFSNVADKYDLMNDLMSFGLHRLWKDEFIRRIPNLNSHILDVASGSGDIALKLAKKARDRGNNIALTLSDINEEMLKNAKKKTIDLNLFQNLKFTVASAEELPYPDNSFDYYTIAFGIRNVPDINKALKEAYRVLKPMGKFICLEFSKVKESYFKDFYKFYSFSIIPTIGQVITGNKEAYEYLVESIELFPSQDEFRIMIKEAGFEEVGYKNLSGGIVAIHSGYKI</sequence>
<name>UBIE_RICAH</name>
<proteinExistence type="inferred from homology"/>
<reference key="1">
    <citation type="submission" date="2007-09" db="EMBL/GenBank/DDBJ databases">
        <title>Complete genome sequence of Rickettsia akari.</title>
        <authorList>
            <person name="Madan A."/>
            <person name="Fahey J."/>
            <person name="Helton E."/>
            <person name="Ketteman M."/>
            <person name="Madan A."/>
            <person name="Rodrigues S."/>
            <person name="Sanchez A."/>
            <person name="Whiting M."/>
            <person name="Dasch G."/>
            <person name="Eremeeva M."/>
        </authorList>
    </citation>
    <scope>NUCLEOTIDE SEQUENCE [LARGE SCALE GENOMIC DNA]</scope>
    <source>
        <strain>Hartford</strain>
    </source>
</reference>
<accession>A8GPI0</accession>
<comment type="function">
    <text evidence="1">Methyltransferase required for the conversion of demethylmenaquinol (DMKH2) to menaquinol (MKH2) and the conversion of 2-polyprenyl-6-methoxy-1,4-benzoquinol (DDMQH2) to 2-polyprenyl-3-methyl-6-methoxy-1,4-benzoquinol (DMQH2).</text>
</comment>
<comment type="catalytic activity">
    <reaction evidence="1">
        <text>a 2-demethylmenaquinol + S-adenosyl-L-methionine = a menaquinol + S-adenosyl-L-homocysteine + H(+)</text>
        <dbReference type="Rhea" id="RHEA:42640"/>
        <dbReference type="Rhea" id="RHEA-COMP:9539"/>
        <dbReference type="Rhea" id="RHEA-COMP:9563"/>
        <dbReference type="ChEBI" id="CHEBI:15378"/>
        <dbReference type="ChEBI" id="CHEBI:18151"/>
        <dbReference type="ChEBI" id="CHEBI:55437"/>
        <dbReference type="ChEBI" id="CHEBI:57856"/>
        <dbReference type="ChEBI" id="CHEBI:59789"/>
        <dbReference type="EC" id="2.1.1.163"/>
    </reaction>
</comment>
<comment type="catalytic activity">
    <reaction evidence="1">
        <text>a 2-methoxy-6-(all-trans-polyprenyl)benzene-1,4-diol + S-adenosyl-L-methionine = a 5-methoxy-2-methyl-3-(all-trans-polyprenyl)benzene-1,4-diol + S-adenosyl-L-homocysteine + H(+)</text>
        <dbReference type="Rhea" id="RHEA:28286"/>
        <dbReference type="Rhea" id="RHEA-COMP:10858"/>
        <dbReference type="Rhea" id="RHEA-COMP:10859"/>
        <dbReference type="ChEBI" id="CHEBI:15378"/>
        <dbReference type="ChEBI" id="CHEBI:57856"/>
        <dbReference type="ChEBI" id="CHEBI:59789"/>
        <dbReference type="ChEBI" id="CHEBI:84166"/>
        <dbReference type="ChEBI" id="CHEBI:84167"/>
        <dbReference type="EC" id="2.1.1.201"/>
    </reaction>
</comment>
<comment type="pathway">
    <text evidence="1">Quinol/quinone metabolism; menaquinone biosynthesis; menaquinol from 1,4-dihydroxy-2-naphthoate: step 2/2.</text>
</comment>
<comment type="pathway">
    <text evidence="1">Cofactor biosynthesis; ubiquinone biosynthesis.</text>
</comment>
<comment type="similarity">
    <text evidence="1">Belongs to the class I-like SAM-binding methyltransferase superfamily. MenG/UbiE family.</text>
</comment>
<keyword id="KW-0474">Menaquinone biosynthesis</keyword>
<keyword id="KW-0489">Methyltransferase</keyword>
<keyword id="KW-0949">S-adenosyl-L-methionine</keyword>
<keyword id="KW-0808">Transferase</keyword>
<keyword id="KW-0831">Ubiquinone biosynthesis</keyword>
<evidence type="ECO:0000255" key="1">
    <source>
        <dbReference type="HAMAP-Rule" id="MF_01813"/>
    </source>
</evidence>
<feature type="chain" id="PRO_1000056285" description="Ubiquinone/menaquinone biosynthesis C-methyltransferase UbiE">
    <location>
        <begin position="1"/>
        <end position="248"/>
    </location>
</feature>
<feature type="binding site" evidence="1">
    <location>
        <position position="68"/>
    </location>
    <ligand>
        <name>S-adenosyl-L-methionine</name>
        <dbReference type="ChEBI" id="CHEBI:59789"/>
    </ligand>
</feature>
<feature type="binding site" evidence="1">
    <location>
        <position position="92"/>
    </location>
    <ligand>
        <name>S-adenosyl-L-methionine</name>
        <dbReference type="ChEBI" id="CHEBI:59789"/>
    </ligand>
</feature>